<protein>
    <recommendedName>
        <fullName evidence="1">Digeranylgeranylglyceryl phosphate synthase</fullName>
        <shortName evidence="1">DGGGP synthase</shortName>
        <shortName evidence="1">DGGGPS</shortName>
        <ecNumber evidence="1">2.5.1.42</ecNumber>
    </recommendedName>
    <alternativeName>
        <fullName evidence="1">(S)-2,3-di-O-geranylgeranylglyceryl phosphate synthase</fullName>
    </alternativeName>
    <alternativeName>
        <fullName evidence="1">Geranylgeranylglycerol-phosphate geranylgeranyltransferase</fullName>
    </alternativeName>
</protein>
<organism>
    <name type="scientific">Methanobrevibacter smithii (strain ATCC 35061 / DSM 861 / OCM 144 / PS)</name>
    <dbReference type="NCBI Taxonomy" id="420247"/>
    <lineage>
        <taxon>Archaea</taxon>
        <taxon>Methanobacteriati</taxon>
        <taxon>Methanobacteriota</taxon>
        <taxon>Methanomada group</taxon>
        <taxon>Methanobacteria</taxon>
        <taxon>Methanobacteriales</taxon>
        <taxon>Methanobacteriaceae</taxon>
        <taxon>Methanobrevibacter</taxon>
    </lineage>
</organism>
<evidence type="ECO:0000255" key="1">
    <source>
        <dbReference type="HAMAP-Rule" id="MF_01286"/>
    </source>
</evidence>
<proteinExistence type="inferred from homology"/>
<name>DGGGP_METS3</name>
<gene>
    <name type="ordered locus">Msm_0941</name>
</gene>
<reference key="1">
    <citation type="journal article" date="2007" name="Proc. Natl. Acad. Sci. U.S.A.">
        <title>Genomic and metabolic adaptations of Methanobrevibacter smithii to the human gut.</title>
        <authorList>
            <person name="Samuel B.S."/>
            <person name="Hansen E.E."/>
            <person name="Manchester J.K."/>
            <person name="Coutinho P.M."/>
            <person name="Henrissat B."/>
            <person name="Fulton R."/>
            <person name="Latreille P."/>
            <person name="Kim K."/>
            <person name="Wilson R.K."/>
            <person name="Gordon J.I."/>
        </authorList>
    </citation>
    <scope>NUCLEOTIDE SEQUENCE [LARGE SCALE GENOMIC DNA]</scope>
    <source>
        <strain>ATCC 35061 / DSM 861 / OCM 144 / PS</strain>
    </source>
</reference>
<sequence>MNPYVEIIRPGNVIMAIIAVILVAILAKSVDIPIILAMLAVFFAMSAGNVINDYFDYKIDLINKPQRPIPSGRISLDNAKNYAYLLFILAAIVGFLISCLVDTWIPCTIVIFSDIILYLYAYKLKSTPLIGNLTVGFMTGLCFIFAGYTFNEGLIIYESYLLAFFALIMTTAREITKDIEDMEGDMAEGAKTFPILYGPKISAIIAISLIIIDCALCPLLYIYHIFNINYLIVVSIAVLIFLYGAVLLRNQDSKTANKVSKYLKTGMLIAFIAFAIGTFTITF</sequence>
<comment type="function">
    <text evidence="1">Prenyltransferase that catalyzes the transfer of the geranylgeranyl moiety of geranylgeranyl diphosphate (GGPP) to the C2 hydroxyl of (S)-3-O-geranylgeranylglyceryl phosphate (GGGP). This reaction is the second ether-bond-formation step in the biosynthesis of archaeal membrane lipids.</text>
</comment>
<comment type="catalytic activity">
    <reaction evidence="1">
        <text>sn-3-O-(geranylgeranyl)glycerol 1-phosphate + (2E,6E,10E)-geranylgeranyl diphosphate = 2,3-bis-O-(geranylgeranyl)-sn-glycerol 1-phosphate + diphosphate</text>
        <dbReference type="Rhea" id="RHEA:18109"/>
        <dbReference type="ChEBI" id="CHEBI:33019"/>
        <dbReference type="ChEBI" id="CHEBI:57677"/>
        <dbReference type="ChEBI" id="CHEBI:58756"/>
        <dbReference type="ChEBI" id="CHEBI:58837"/>
        <dbReference type="EC" id="2.5.1.42"/>
    </reaction>
</comment>
<comment type="cofactor">
    <cofactor evidence="1">
        <name>Mg(2+)</name>
        <dbReference type="ChEBI" id="CHEBI:18420"/>
    </cofactor>
</comment>
<comment type="pathway">
    <text evidence="1">Membrane lipid metabolism; glycerophospholipid metabolism.</text>
</comment>
<comment type="subcellular location">
    <subcellularLocation>
        <location evidence="1">Cell membrane</location>
        <topology evidence="1">Multi-pass membrane protein</topology>
    </subcellularLocation>
</comment>
<comment type="similarity">
    <text evidence="1">Belongs to the UbiA prenyltransferase family. DGGGP synthase subfamily.</text>
</comment>
<feature type="chain" id="PRO_0000350700" description="Digeranylgeranylglyceryl phosphate synthase">
    <location>
        <begin position="1"/>
        <end position="283"/>
    </location>
</feature>
<feature type="transmembrane region" description="Helical" evidence="1">
    <location>
        <begin position="5"/>
        <end position="27"/>
    </location>
</feature>
<feature type="transmembrane region" description="Helical" evidence="1">
    <location>
        <begin position="37"/>
        <end position="57"/>
    </location>
</feature>
<feature type="transmembrane region" description="Helical" evidence="1">
    <location>
        <begin position="85"/>
        <end position="105"/>
    </location>
</feature>
<feature type="transmembrane region" description="Helical" evidence="1">
    <location>
        <begin position="128"/>
        <end position="148"/>
    </location>
</feature>
<feature type="transmembrane region" description="Helical" evidence="1">
    <location>
        <begin position="152"/>
        <end position="172"/>
    </location>
</feature>
<feature type="transmembrane region" description="Helical" evidence="1">
    <location>
        <begin position="203"/>
        <end position="223"/>
    </location>
</feature>
<feature type="transmembrane region" description="Helical" evidence="1">
    <location>
        <begin position="228"/>
        <end position="248"/>
    </location>
</feature>
<feature type="transmembrane region" description="Helical" evidence="1">
    <location>
        <begin position="263"/>
        <end position="283"/>
    </location>
</feature>
<keyword id="KW-1003">Cell membrane</keyword>
<keyword id="KW-0444">Lipid biosynthesis</keyword>
<keyword id="KW-0443">Lipid metabolism</keyword>
<keyword id="KW-0460">Magnesium</keyword>
<keyword id="KW-0472">Membrane</keyword>
<keyword id="KW-0594">Phospholipid biosynthesis</keyword>
<keyword id="KW-1208">Phospholipid metabolism</keyword>
<keyword id="KW-0808">Transferase</keyword>
<keyword id="KW-0812">Transmembrane</keyword>
<keyword id="KW-1133">Transmembrane helix</keyword>
<dbReference type="EC" id="2.5.1.42" evidence="1"/>
<dbReference type="EMBL" id="CP000678">
    <property type="protein sequence ID" value="ABQ87146.1"/>
    <property type="molecule type" value="Genomic_DNA"/>
</dbReference>
<dbReference type="RefSeq" id="WP_004032994.1">
    <property type="nucleotide sequence ID" value="NZ_CP117965.1"/>
</dbReference>
<dbReference type="SMR" id="A5ULR8"/>
<dbReference type="STRING" id="420247.Msm_0941"/>
<dbReference type="EnsemblBacteria" id="ABQ87146">
    <property type="protein sequence ID" value="ABQ87146"/>
    <property type="gene ID" value="Msm_0941"/>
</dbReference>
<dbReference type="KEGG" id="msi:Msm_0941"/>
<dbReference type="PATRIC" id="fig|420247.28.peg.937"/>
<dbReference type="eggNOG" id="arCOG00476">
    <property type="taxonomic scope" value="Archaea"/>
</dbReference>
<dbReference type="HOGENOM" id="CLU_073311_1_1_2"/>
<dbReference type="BioCyc" id="MSMI420247:GHWZ-966-MONOMER"/>
<dbReference type="UniPathway" id="UPA00940"/>
<dbReference type="Proteomes" id="UP000001992">
    <property type="component" value="Chromosome"/>
</dbReference>
<dbReference type="GO" id="GO:0005886">
    <property type="term" value="C:plasma membrane"/>
    <property type="evidence" value="ECO:0007669"/>
    <property type="project" value="UniProtKB-SubCell"/>
</dbReference>
<dbReference type="GO" id="GO:0047295">
    <property type="term" value="F:geranylgeranylglycerol-phosphate geranylgeranyltransferase activity"/>
    <property type="evidence" value="ECO:0007669"/>
    <property type="project" value="UniProtKB-UniRule"/>
</dbReference>
<dbReference type="GO" id="GO:0000287">
    <property type="term" value="F:magnesium ion binding"/>
    <property type="evidence" value="ECO:0007669"/>
    <property type="project" value="UniProtKB-UniRule"/>
</dbReference>
<dbReference type="GO" id="GO:0046474">
    <property type="term" value="P:glycerophospholipid biosynthetic process"/>
    <property type="evidence" value="ECO:0007669"/>
    <property type="project" value="UniProtKB-UniRule"/>
</dbReference>
<dbReference type="CDD" id="cd13961">
    <property type="entry name" value="PT_UbiA_DGGGPS"/>
    <property type="match status" value="1"/>
</dbReference>
<dbReference type="Gene3D" id="1.10.357.140">
    <property type="entry name" value="UbiA prenyltransferase"/>
    <property type="match status" value="1"/>
</dbReference>
<dbReference type="Gene3D" id="1.20.120.1780">
    <property type="entry name" value="UbiA prenyltransferase"/>
    <property type="match status" value="1"/>
</dbReference>
<dbReference type="HAMAP" id="MF_01286">
    <property type="entry name" value="DGGGP_synth"/>
    <property type="match status" value="1"/>
</dbReference>
<dbReference type="InterPro" id="IPR023547">
    <property type="entry name" value="DGGGP_synth"/>
</dbReference>
<dbReference type="InterPro" id="IPR050475">
    <property type="entry name" value="Prenyltransferase_related"/>
</dbReference>
<dbReference type="InterPro" id="IPR000537">
    <property type="entry name" value="UbiA_prenyltransferase"/>
</dbReference>
<dbReference type="InterPro" id="IPR044878">
    <property type="entry name" value="UbiA_sf"/>
</dbReference>
<dbReference type="NCBIfam" id="NF009523">
    <property type="entry name" value="PRK12884.1"/>
    <property type="match status" value="1"/>
</dbReference>
<dbReference type="PANTHER" id="PTHR42723">
    <property type="entry name" value="CHLOROPHYLL SYNTHASE"/>
    <property type="match status" value="1"/>
</dbReference>
<dbReference type="PANTHER" id="PTHR42723:SF1">
    <property type="entry name" value="CHLOROPHYLL SYNTHASE, CHLOROPLASTIC"/>
    <property type="match status" value="1"/>
</dbReference>
<dbReference type="Pfam" id="PF01040">
    <property type="entry name" value="UbiA"/>
    <property type="match status" value="1"/>
</dbReference>
<accession>A5ULR8</accession>